<evidence type="ECO:0000250" key="1">
    <source>
        <dbReference type="UniProtKB" id="P03070"/>
    </source>
</evidence>
<evidence type="ECO:0000255" key="2">
    <source>
        <dbReference type="PROSITE-ProRule" id="PRU00286"/>
    </source>
</evidence>
<evidence type="ECO:0000255" key="3">
    <source>
        <dbReference type="PROSITE-ProRule" id="PRU00551"/>
    </source>
</evidence>
<evidence type="ECO:0000255" key="4">
    <source>
        <dbReference type="PROSITE-ProRule" id="PRU00620"/>
    </source>
</evidence>
<evidence type="ECO:0000255" key="5">
    <source>
        <dbReference type="PROSITE-ProRule" id="PRU00671"/>
    </source>
</evidence>
<evidence type="ECO:0000256" key="6">
    <source>
        <dbReference type="SAM" id="MobiDB-lite"/>
    </source>
</evidence>
<evidence type="ECO:0000305" key="7"/>
<keyword id="KW-0007">Acetylation</keyword>
<keyword id="KW-0025">Alternative splicing</keyword>
<keyword id="KW-0067">ATP-binding</keyword>
<keyword id="KW-0235">DNA replication</keyword>
<keyword id="KW-0238">DNA-binding</keyword>
<keyword id="KW-0244">Early protein</keyword>
<keyword id="KW-1078">G1/S host cell cycle checkpoint dysregulation by virus</keyword>
<keyword id="KW-0347">Helicase</keyword>
<keyword id="KW-1048">Host nucleus</keyword>
<keyword id="KW-0945">Host-virus interaction</keyword>
<keyword id="KW-0378">Hydrolase</keyword>
<keyword id="KW-1090">Inhibition of host innate immune response by virus</keyword>
<keyword id="KW-1114">Inhibition of host interferon signaling pathway by virus</keyword>
<keyword id="KW-1096">Inhibition of host JAK1 by virus</keyword>
<keyword id="KW-0922">Interferon antiviral system evasion</keyword>
<keyword id="KW-0413">Isomerase</keyword>
<keyword id="KW-0460">Magnesium</keyword>
<keyword id="KW-0479">Metal-binding</keyword>
<keyword id="KW-1121">Modulation of host cell cycle by virus</keyword>
<keyword id="KW-0547">Nucleotide-binding</keyword>
<keyword id="KW-0553">Oncogene</keyword>
<keyword id="KW-0597">Phosphoprotein</keyword>
<keyword id="KW-0899">Viral immunoevasion</keyword>
<keyword id="KW-0862">Zinc</keyword>
<keyword id="KW-0863">Zinc-finger</keyword>
<organism>
    <name type="scientific">BK polyomavirus (strain AS)</name>
    <name type="common">BKPyV</name>
    <dbReference type="NCBI Taxonomy" id="10631"/>
    <lineage>
        <taxon>Viruses</taxon>
        <taxon>Monodnaviria</taxon>
        <taxon>Shotokuvirae</taxon>
        <taxon>Cossaviricota</taxon>
        <taxon>Papovaviricetes</taxon>
        <taxon>Sepolyvirales</taxon>
        <taxon>Polyomaviridae</taxon>
        <taxon>Betapolyomavirus</taxon>
        <taxon>BK polyomavirus</taxon>
    </lineage>
</organism>
<name>LT_POVBA</name>
<comment type="function">
    <text evidence="1">Isoform large T antigen is a key early protein essential for both driving viral replication and inducing cellular transformation. Plays a role in viral genome replication by driving entry of quiescent cells into the cell cycle and by autoregulating the synthesis of viral early mRNA. Displays highly oncogenic activities by corrupting the host cellular checkpoint mechanisms that guard cell division and the transcription, replication, and repair of DNA. Participates in the modulation of cellular gene expression preceeding viral DNA replication. This step involves binding to host key cell cycle regulators retinoblastoma protein RB1/pRb and TP53. Induces the disassembly of host E2F1 transcription factors from RB1, thus promoting transcriptional activation of E2F1-regulated S-phase genes. Inhibits host TP53 binding to DNA, abrogating the ability of TP53 to stimulate gene expression. Plays the role of a TFIID-associated factor (TAF) in transcription initiation for all three RNA polymerases, by stabilizing the TBP-TFIIA complex on promoters. Initiates viral DNA replication and unwinding via interactions with the viral origin of replication. Binds two adjacent sites in the SV40 origin. The replication fork movement is facilitated by Large T antigen helicase activity. Has processive 3'-5' DNA helicase activity which requires a short 3' single-stranded region and ATP. Activates the transcription of viral late mRNA, through host TBP and TFIIA stabilization. Interferes with histone deacetylation mediated by HDAC1, leading to activation of transcription.</text>
</comment>
<comment type="catalytic activity">
    <reaction evidence="1">
        <text>Couples ATP hydrolysis with the unwinding of duplex DNA by translocating in the 3'-5' direction.</text>
        <dbReference type="EC" id="5.6.2.4"/>
    </reaction>
</comment>
<comment type="catalytic activity">
    <reaction evidence="1">
        <text>ATP + H2O = ADP + phosphate + H(+)</text>
        <dbReference type="Rhea" id="RHEA:13065"/>
        <dbReference type="ChEBI" id="CHEBI:15377"/>
        <dbReference type="ChEBI" id="CHEBI:15378"/>
        <dbReference type="ChEBI" id="CHEBI:30616"/>
        <dbReference type="ChEBI" id="CHEBI:43474"/>
        <dbReference type="ChEBI" id="CHEBI:456216"/>
        <dbReference type="EC" id="5.6.2.4"/>
    </reaction>
</comment>
<comment type="cofactor">
    <cofactor evidence="1">
        <name>Mg(2+)</name>
        <dbReference type="ChEBI" id="CHEBI:18420"/>
    </cofactor>
    <text evidence="1">DNA helicase activity requires Mg(2+).</text>
</comment>
<comment type="subunit">
    <text evidence="1">Forms homohexamers in the presence of ATP. Interacts with host HDAC1. Interacts (via LXCXE domain) with host RB1; the interaction induces the aberrant dissociation of RB1-E2F1 complex thereby disrupting RB1's activity. Interacts (via LXCXE domain) with host pRB-related proteins RBL1 and RBL2. Interacts (via C-terminus) with host TOP1 and POLA1 allowing DNA replication. Interacts with host TP53, inhibiting TP53 binding to DNA. Interacts with host preinitiation complex components TBP, TFIIA and TFIID to regulate transcription initiation.</text>
</comment>
<comment type="subcellular location">
    <subcellularLocation>
        <location evidence="1">Host nucleus</location>
    </subcellularLocation>
</comment>
<comment type="alternative products">
    <event type="alternative splicing"/>
    <isoform>
        <id>P14999-1</id>
        <name>Large T antigen</name>
        <sequence type="displayed"/>
    </isoform>
    <isoform>
        <id>P15000-1</id>
        <name>Small t antigen</name>
        <sequence type="external"/>
    </isoform>
</comment>
<comment type="domain">
    <text evidence="1">The J domain is essential for multiple viral activities, including virion assembly, viral DNA replication, transformation and transcriptional activation.</text>
</comment>
<comment type="domain">
    <text evidence="1">The LXCXE motif specifically binds to host pRB, RBL1, and RBL2.</text>
</comment>
<comment type="domain">
    <text evidence="1">The zinc finger region contributes to protein-protein interactions essential for the assembly of stable T-antigen hexamers at the origin of replication. The hexamers are required for subsequent alterations in the structure of origin DNA.</text>
</comment>
<comment type="domain">
    <text evidence="1">The ATP binding/ATPase domain is required for proper hexamer assembly and helicase activity.</text>
</comment>
<comment type="PTM">
    <text evidence="1">Phosphorylated on both serine and threonine residues. Small t antigen inhibits the dephosphorylation by the AC form of PP2A (By similarity).</text>
</comment>
<comment type="PTM">
    <text evidence="1">O-Glycosylated near the C-terminal region.</text>
</comment>
<comment type="PTM">
    <text evidence="1">Acetylated by CBP in a TP53-dependent manner.</text>
</comment>
<protein>
    <recommendedName>
        <fullName>Large T antigen</fullName>
        <shortName>LT</shortName>
        <shortName>LT-AG</shortName>
        <ecNumber evidence="1">5.6.2.4</ecNumber>
    </recommendedName>
    <alternativeName>
        <fullName evidence="7">DNA 3'-5' helicase large T antigen</fullName>
    </alternativeName>
</protein>
<organismHost>
    <name type="scientific">Homo sapiens</name>
    <name type="common">Human</name>
    <dbReference type="NCBI Taxonomy" id="9606"/>
</organismHost>
<feature type="chain" id="PRO_0000115036" description="Large T antigen">
    <location>
        <begin position="1"/>
        <end position="691"/>
    </location>
</feature>
<feature type="domain" description="J" evidence="2">
    <location>
        <begin position="12"/>
        <end position="75"/>
    </location>
</feature>
<feature type="domain" description="SF3 helicase" evidence="3">
    <location>
        <begin position="402"/>
        <end position="562"/>
    </location>
</feature>
<feature type="DNA-binding region" description="T-ag OBD" evidence="4">
    <location>
        <begin position="141"/>
        <end position="256"/>
    </location>
</feature>
<feature type="zinc finger region" description="T-ag D1-type" evidence="5">
    <location>
        <begin position="267"/>
        <end position="359"/>
    </location>
</feature>
<feature type="region of interest" description="Disordered" evidence="6">
    <location>
        <begin position="117"/>
        <end position="138"/>
    </location>
</feature>
<feature type="region of interest" description="Disordered" evidence="6">
    <location>
        <begin position="634"/>
        <end position="670"/>
    </location>
</feature>
<feature type="short sequence motif" description="LXCXE motif" evidence="1">
    <location>
        <begin position="105"/>
        <end position="109"/>
    </location>
</feature>
<feature type="short sequence motif" description="Nuclear localization signal" evidence="1">
    <location>
        <begin position="127"/>
        <end position="134"/>
    </location>
</feature>
<feature type="compositionally biased region" description="Low complexity" evidence="6">
    <location>
        <begin position="645"/>
        <end position="661"/>
    </location>
</feature>
<feature type="binding site" evidence="5">
    <location>
        <position position="304"/>
    </location>
    <ligand>
        <name>Zn(2+)</name>
        <dbReference type="ChEBI" id="CHEBI:29105"/>
    </ligand>
</feature>
<feature type="binding site" evidence="5">
    <location>
        <position position="307"/>
    </location>
    <ligand>
        <name>Zn(2+)</name>
        <dbReference type="ChEBI" id="CHEBI:29105"/>
    </ligand>
</feature>
<feature type="binding site" evidence="5">
    <location>
        <position position="315"/>
    </location>
    <ligand>
        <name>Zn(2+)</name>
        <dbReference type="ChEBI" id="CHEBI:29105"/>
    </ligand>
</feature>
<feature type="binding site" evidence="5">
    <location>
        <position position="319"/>
    </location>
    <ligand>
        <name>Zn(2+)</name>
        <dbReference type="ChEBI" id="CHEBI:29105"/>
    </ligand>
</feature>
<feature type="binding site" evidence="3">
    <location>
        <begin position="428"/>
        <end position="435"/>
    </location>
    <ligand>
        <name>ATP</name>
        <dbReference type="ChEBI" id="CHEBI:30616"/>
    </ligand>
</feature>
<feature type="modified residue" description="N-acetylmethionine; by host" evidence="1">
    <location>
        <position position="1"/>
    </location>
</feature>
<feature type="modified residue" description="Phosphoserine; by host" evidence="1">
    <location>
        <position position="114"/>
    </location>
</feature>
<feature type="modified residue" description="Phosphoserine; by host" evidence="1">
    <location>
        <position position="122"/>
    </location>
</feature>
<feature type="modified residue" description="Phosphoserine; by host" evidence="1">
    <location>
        <position position="125"/>
    </location>
</feature>
<feature type="modified residue" description="Phosphothreonine; by host" evidence="1">
    <location>
        <position position="126"/>
    </location>
</feature>
<feature type="modified residue" description="Phosphoserine; by host" evidence="1">
    <location>
        <position position="661"/>
    </location>
</feature>
<feature type="modified residue" description="N6-acetyllysine; by host" evidence="1">
    <location>
        <position position="683"/>
    </location>
</feature>
<feature type="modified residue" description="Phosphothreonine; by host" evidence="1">
    <location>
        <position position="687"/>
    </location>
</feature>
<accession>P14999</accession>
<reference key="1">
    <citation type="journal article" date="1989" name="J. Virol.">
        <title>Nucleotide sequence of the human polyomavirus AS virus, an antigenic variant of BK virus.</title>
        <authorList>
            <person name="Tavis J.E."/>
            <person name="Walker D.L."/>
            <person name="Gardner S.D."/>
            <person name="Frisque R.J."/>
        </authorList>
    </citation>
    <scope>NUCLEOTIDE SEQUENCE [GENOMIC DNA]</scope>
</reference>
<dbReference type="EC" id="5.6.2.4" evidence="1"/>
<dbReference type="EMBL" id="M23122">
    <property type="protein sequence ID" value="AAA46878.1"/>
    <property type="molecule type" value="Genomic_DNA"/>
</dbReference>
<dbReference type="PIR" id="A33278">
    <property type="entry name" value="TVVPAS"/>
</dbReference>
<dbReference type="SMR" id="P14999"/>
<dbReference type="Proteomes" id="UP000008166">
    <property type="component" value="Genome"/>
</dbReference>
<dbReference type="GO" id="GO:0042025">
    <property type="term" value="C:host cell nucleus"/>
    <property type="evidence" value="ECO:0007669"/>
    <property type="project" value="UniProtKB-SubCell"/>
</dbReference>
<dbReference type="GO" id="GO:0005524">
    <property type="term" value="F:ATP binding"/>
    <property type="evidence" value="ECO:0007669"/>
    <property type="project" value="UniProtKB-KW"/>
</dbReference>
<dbReference type="GO" id="GO:0016887">
    <property type="term" value="F:ATP hydrolysis activity"/>
    <property type="evidence" value="ECO:0007669"/>
    <property type="project" value="RHEA"/>
</dbReference>
<dbReference type="GO" id="GO:0003688">
    <property type="term" value="F:DNA replication origin binding"/>
    <property type="evidence" value="ECO:0007669"/>
    <property type="project" value="InterPro"/>
</dbReference>
<dbReference type="GO" id="GO:0004386">
    <property type="term" value="F:helicase activity"/>
    <property type="evidence" value="ECO:0007669"/>
    <property type="project" value="UniProtKB-KW"/>
</dbReference>
<dbReference type="GO" id="GO:0008270">
    <property type="term" value="F:zinc ion binding"/>
    <property type="evidence" value="ECO:0007669"/>
    <property type="project" value="UniProtKB-KW"/>
</dbReference>
<dbReference type="GO" id="GO:0006260">
    <property type="term" value="P:DNA replication"/>
    <property type="evidence" value="ECO:0007669"/>
    <property type="project" value="UniProtKB-KW"/>
</dbReference>
<dbReference type="GO" id="GO:0039645">
    <property type="term" value="P:symbiont-mediated perturbation of host cell cycle G1/S transition checkpoint"/>
    <property type="evidence" value="ECO:0007669"/>
    <property type="project" value="UniProtKB-KW"/>
</dbReference>
<dbReference type="GO" id="GO:0052170">
    <property type="term" value="P:symbiont-mediated suppression of host innate immune response"/>
    <property type="evidence" value="ECO:0007669"/>
    <property type="project" value="UniProtKB-KW"/>
</dbReference>
<dbReference type="GO" id="GO:0039576">
    <property type="term" value="P:symbiont-mediated suppression of host JAK-STAT cascade via inhibition of JAK1 activity"/>
    <property type="evidence" value="ECO:0007669"/>
    <property type="project" value="UniProtKB-KW"/>
</dbReference>
<dbReference type="GO" id="GO:0039502">
    <property type="term" value="P:symbiont-mediated suppression of host type I interferon-mediated signaling pathway"/>
    <property type="evidence" value="ECO:0007669"/>
    <property type="project" value="UniProtKB-KW"/>
</dbReference>
<dbReference type="CDD" id="cd06257">
    <property type="entry name" value="DnaJ"/>
    <property type="match status" value="1"/>
</dbReference>
<dbReference type="FunFam" id="1.10.287.110:FF:000161">
    <property type="entry name" value="Small t antigen"/>
    <property type="match status" value="1"/>
</dbReference>
<dbReference type="Gene3D" id="3.40.1310.20">
    <property type="match status" value="1"/>
</dbReference>
<dbReference type="Gene3D" id="1.10.287.110">
    <property type="entry name" value="DnaJ domain"/>
    <property type="match status" value="1"/>
</dbReference>
<dbReference type="Gene3D" id="1.20.1050.70">
    <property type="entry name" value="Large T antigen, SV40, domain 3"/>
    <property type="match status" value="1"/>
</dbReference>
<dbReference type="Gene3D" id="3.40.50.300">
    <property type="entry name" value="P-loop containing nucleotide triphosphate hydrolases"/>
    <property type="match status" value="1"/>
</dbReference>
<dbReference type="Gene3D" id="1.10.10.510">
    <property type="entry name" value="Zinc finger, large T-antigen D1 domain"/>
    <property type="match status" value="1"/>
</dbReference>
<dbReference type="InterPro" id="IPR001623">
    <property type="entry name" value="DnaJ_domain"/>
</dbReference>
<dbReference type="InterPro" id="IPR014015">
    <property type="entry name" value="Helicase_SF3_DNA-vir"/>
</dbReference>
<dbReference type="InterPro" id="IPR036869">
    <property type="entry name" value="J_dom_sf"/>
</dbReference>
<dbReference type="InterPro" id="IPR016392">
    <property type="entry name" value="Lg_T_Ag_polyomavir"/>
</dbReference>
<dbReference type="InterPro" id="IPR010932">
    <property type="entry name" value="Lg_T_Ag_Polyomavir_C"/>
</dbReference>
<dbReference type="InterPro" id="IPR027417">
    <property type="entry name" value="P-loop_NTPase"/>
</dbReference>
<dbReference type="InterPro" id="IPR003133">
    <property type="entry name" value="T_Ag_DNA-bd"/>
</dbReference>
<dbReference type="InterPro" id="IPR017910">
    <property type="entry name" value="Znf_lg_T-Ag_D1-typ"/>
</dbReference>
<dbReference type="InterPro" id="IPR037102">
    <property type="entry name" value="Znf_lg_T-Ag_D1_dom_sf"/>
</dbReference>
<dbReference type="Pfam" id="PF06431">
    <property type="entry name" value="Polyoma_lg_T_C"/>
    <property type="match status" value="1"/>
</dbReference>
<dbReference type="Pfam" id="PF02217">
    <property type="entry name" value="T_Ag_DNA_bind"/>
    <property type="match status" value="1"/>
</dbReference>
<dbReference type="PIRSF" id="PIRSF003368">
    <property type="entry name" value="Large_T_antigen_polyomaV"/>
    <property type="match status" value="1"/>
</dbReference>
<dbReference type="SMART" id="SM00271">
    <property type="entry name" value="DnaJ"/>
    <property type="match status" value="1"/>
</dbReference>
<dbReference type="SUPFAM" id="SSF46565">
    <property type="entry name" value="Chaperone J-domain"/>
    <property type="match status" value="1"/>
</dbReference>
<dbReference type="SUPFAM" id="SSF55464">
    <property type="entry name" value="Origin of replication-binding domain, RBD-like"/>
    <property type="match status" value="1"/>
</dbReference>
<dbReference type="SUPFAM" id="SSF52540">
    <property type="entry name" value="P-loop containing nucleoside triphosphate hydrolases"/>
    <property type="match status" value="1"/>
</dbReference>
<dbReference type="PROSITE" id="PS50076">
    <property type="entry name" value="DNAJ_2"/>
    <property type="match status" value="1"/>
</dbReference>
<dbReference type="PROSITE" id="PS51206">
    <property type="entry name" value="SF3_HELICASE_1"/>
    <property type="match status" value="1"/>
</dbReference>
<dbReference type="PROSITE" id="PS51287">
    <property type="entry name" value="T_AG_OBD"/>
    <property type="match status" value="1"/>
</dbReference>
<dbReference type="PROSITE" id="PS51341">
    <property type="entry name" value="ZF_LTAG_D1"/>
    <property type="match status" value="1"/>
</dbReference>
<sequence length="691" mass="80129">MDKVLNREESMELMDLLGLERAAWGNLPLMRKAYLKKCKEFHPDKGGDEDKMKRMNTLYKKMEQDVKVAHQPDFGTWNSSEVPTYGTEEWESWWSSFNEKWDEDLFCHEDMFASDEEATADSQHSTPPKKKRKVEDPKDFPSDLHQFLSQAVFSNRTLACFAVYTTKEKAQILYKKLMEKYSVTFISRHMCAGHNIIFFLTPHRHRVSAINNFCQKLCTFSFLICKGVNKEYLLYSALTRDPYHIIEESIQGGLKEHDFNPEEPEETKQVSWKLITEYAVETKCEDVFLLLGMYLEFQYNVEECKKCQKKDQPYHFKYHEKHFANAIIFAESKNQKSICQQAVDTVLAKKRVDTLHMTREEMLTERFNHILDKMDLIFGAHGNAVLEQYMAGVAWLHCLLPKMDSVIFDFLHCVVFNVPKRRYWLFKGPIDSGKTTLAAGLLDLCGGKALNVNLPMERLTFELGVAIDQYMVVFEDVKGTGAESKDLPSGHGINNLDSLRDYLDGSVKVNLEKKHLNKRTQIFPPGLVTMNEYPVPKTLQARFVRQIDFRPKIYLRKSLQNSEFLLEKRILQSGMTLLLLLIWFRPVADFSKDIQSRIVEWKERLDSEISMYTFSRMKYNICMGKCILDITREEDSETEDSGHGSSTESQSQCSSQVSDTSAPDSENPHSQELHLCKGFQCFKRPKTPPPK</sequence>
<proteinExistence type="inferred from homology"/>